<protein>
    <recommendedName>
        <fullName evidence="1">1-deoxy-D-xylulose-5-phosphate synthase</fullName>
        <ecNumber evidence="1">2.2.1.7</ecNumber>
    </recommendedName>
    <alternativeName>
        <fullName evidence="1">1-deoxyxylulose-5-phosphate synthase</fullName>
        <shortName evidence="1">DXP synthase</shortName>
        <shortName evidence="1">DXPS</shortName>
    </alternativeName>
</protein>
<comment type="function">
    <text evidence="1">Catalyzes the acyloin condensation reaction between C atoms 2 and 3 of pyruvate and glyceraldehyde 3-phosphate to yield 1-deoxy-D-xylulose-5-phosphate (DXP).</text>
</comment>
<comment type="catalytic activity">
    <reaction evidence="1">
        <text>D-glyceraldehyde 3-phosphate + pyruvate + H(+) = 1-deoxy-D-xylulose 5-phosphate + CO2</text>
        <dbReference type="Rhea" id="RHEA:12605"/>
        <dbReference type="ChEBI" id="CHEBI:15361"/>
        <dbReference type="ChEBI" id="CHEBI:15378"/>
        <dbReference type="ChEBI" id="CHEBI:16526"/>
        <dbReference type="ChEBI" id="CHEBI:57792"/>
        <dbReference type="ChEBI" id="CHEBI:59776"/>
        <dbReference type="EC" id="2.2.1.7"/>
    </reaction>
</comment>
<comment type="cofactor">
    <cofactor evidence="1">
        <name>Mg(2+)</name>
        <dbReference type="ChEBI" id="CHEBI:18420"/>
    </cofactor>
    <text evidence="1">Binds 1 Mg(2+) ion per subunit.</text>
</comment>
<comment type="cofactor">
    <cofactor evidence="1">
        <name>thiamine diphosphate</name>
        <dbReference type="ChEBI" id="CHEBI:58937"/>
    </cofactor>
    <text evidence="1">Binds 1 thiamine pyrophosphate per subunit.</text>
</comment>
<comment type="pathway">
    <text evidence="1">Metabolic intermediate biosynthesis; 1-deoxy-D-xylulose 5-phosphate biosynthesis; 1-deoxy-D-xylulose 5-phosphate from D-glyceraldehyde 3-phosphate and pyruvate: step 1/1.</text>
</comment>
<comment type="subunit">
    <text evidence="1">Homodimer.</text>
</comment>
<comment type="similarity">
    <text evidence="1">Belongs to the transketolase family. DXPS subfamily.</text>
</comment>
<name>DXS_METCA</name>
<proteinExistence type="inferred from homology"/>
<evidence type="ECO:0000255" key="1">
    <source>
        <dbReference type="HAMAP-Rule" id="MF_00315"/>
    </source>
</evidence>
<keyword id="KW-0414">Isoprene biosynthesis</keyword>
<keyword id="KW-0460">Magnesium</keyword>
<keyword id="KW-0479">Metal-binding</keyword>
<keyword id="KW-1185">Reference proteome</keyword>
<keyword id="KW-0784">Thiamine biosynthesis</keyword>
<keyword id="KW-0786">Thiamine pyrophosphate</keyword>
<keyword id="KW-0808">Transferase</keyword>
<gene>
    <name evidence="1" type="primary">dxs</name>
    <name type="ordered locus">MCA0817</name>
</gene>
<sequence length="639" mass="68870">MTETKRYALLEAADHPAALRNLPEDRLPELAEELRGYLLESVSRSGGHLAAGLGTVELTIALHYVFNTPEDKLVWDVGHQAYPHKILTGRRARLPTIRKKGGLSAFPNRAESPYDCFGVGHSSTSISAALGMAVAAALERRPIHAVAIIGDGGLTGGMAFEALNHAGTLDANLLIILNDNEMSISPNVGALNNYLAKILSGKFYSSVRESGKHLLGRHMPGVWELARRAEEHVKGMVAPGTLFEELGFNYFGPIDGHDLDTLITTLRNLRDQKGPRFLHVVTRKGKGYAPAEKDPVAYHGVGAFDLDADELPKSKPGTPSYTEVFGQWLCDMAARDRRLLGITPAMREGSGLVEFSQRFPDRYFDVGIAEQHAVTFAAGQASEGYKPVVAIYSTFLQRAYDQLIHDVALQNLPVLFAIDRAGLVGPDGPTHAGSFDLSFMRCIPNMLIMAPSDENECRQMLYTGFIHDGPAAVRYPRGRGPGVRPEETMTAFPVGKGEVRLRGKGTAILAFGTPLAAALAVGERIGATVANMRFVKPLDEALILELAATHDRIVTVEENAIAGGAGSAVGEFLAAQHCGIPVCHIGLKDEFLDQGTREELLAIAGLDQAGIARSIDAFIQATAAADKPRRARGQAKDKH</sequence>
<feature type="chain" id="PRO_0000256437" description="1-deoxy-D-xylulose-5-phosphate synthase">
    <location>
        <begin position="1"/>
        <end position="639"/>
    </location>
</feature>
<feature type="binding site" evidence="1">
    <location>
        <position position="79"/>
    </location>
    <ligand>
        <name>thiamine diphosphate</name>
        <dbReference type="ChEBI" id="CHEBI:58937"/>
    </ligand>
</feature>
<feature type="binding site" evidence="1">
    <location>
        <begin position="120"/>
        <end position="122"/>
    </location>
    <ligand>
        <name>thiamine diphosphate</name>
        <dbReference type="ChEBI" id="CHEBI:58937"/>
    </ligand>
</feature>
<feature type="binding site" evidence="1">
    <location>
        <position position="151"/>
    </location>
    <ligand>
        <name>Mg(2+)</name>
        <dbReference type="ChEBI" id="CHEBI:18420"/>
    </ligand>
</feature>
<feature type="binding site" evidence="1">
    <location>
        <begin position="152"/>
        <end position="153"/>
    </location>
    <ligand>
        <name>thiamine diphosphate</name>
        <dbReference type="ChEBI" id="CHEBI:58937"/>
    </ligand>
</feature>
<feature type="binding site" evidence="1">
    <location>
        <position position="180"/>
    </location>
    <ligand>
        <name>Mg(2+)</name>
        <dbReference type="ChEBI" id="CHEBI:18420"/>
    </ligand>
</feature>
<feature type="binding site" evidence="1">
    <location>
        <position position="180"/>
    </location>
    <ligand>
        <name>thiamine diphosphate</name>
        <dbReference type="ChEBI" id="CHEBI:58937"/>
    </ligand>
</feature>
<feature type="binding site" evidence="1">
    <location>
        <position position="288"/>
    </location>
    <ligand>
        <name>thiamine diphosphate</name>
        <dbReference type="ChEBI" id="CHEBI:58937"/>
    </ligand>
</feature>
<feature type="binding site" evidence="1">
    <location>
        <position position="370"/>
    </location>
    <ligand>
        <name>thiamine diphosphate</name>
        <dbReference type="ChEBI" id="CHEBI:58937"/>
    </ligand>
</feature>
<reference key="1">
    <citation type="journal article" date="2004" name="PLoS Biol.">
        <title>Genomic insights into methanotrophy: the complete genome sequence of Methylococcus capsulatus (Bath).</title>
        <authorList>
            <person name="Ward N.L."/>
            <person name="Larsen O."/>
            <person name="Sakwa J."/>
            <person name="Bruseth L."/>
            <person name="Khouri H.M."/>
            <person name="Durkin A.S."/>
            <person name="Dimitrov G."/>
            <person name="Jiang L."/>
            <person name="Scanlan D."/>
            <person name="Kang K.H."/>
            <person name="Lewis M.R."/>
            <person name="Nelson K.E."/>
            <person name="Methe B.A."/>
            <person name="Wu M."/>
            <person name="Heidelberg J.F."/>
            <person name="Paulsen I.T."/>
            <person name="Fouts D.E."/>
            <person name="Ravel J."/>
            <person name="Tettelin H."/>
            <person name="Ren Q."/>
            <person name="Read T.D."/>
            <person name="DeBoy R.T."/>
            <person name="Seshadri R."/>
            <person name="Salzberg S.L."/>
            <person name="Jensen H.B."/>
            <person name="Birkeland N.K."/>
            <person name="Nelson W.C."/>
            <person name="Dodson R.J."/>
            <person name="Grindhaug S.H."/>
            <person name="Holt I.E."/>
            <person name="Eidhammer I."/>
            <person name="Jonasen I."/>
            <person name="Vanaken S."/>
            <person name="Utterback T.R."/>
            <person name="Feldblyum T.V."/>
            <person name="Fraser C.M."/>
            <person name="Lillehaug J.R."/>
            <person name="Eisen J.A."/>
        </authorList>
    </citation>
    <scope>NUCLEOTIDE SEQUENCE [LARGE SCALE GENOMIC DNA]</scope>
    <source>
        <strain>ATCC 33009 / NCIMB 11132 / Bath</strain>
    </source>
</reference>
<dbReference type="EC" id="2.2.1.7" evidence="1"/>
<dbReference type="EMBL" id="AE017282">
    <property type="protein sequence ID" value="AAU92868.1"/>
    <property type="molecule type" value="Genomic_DNA"/>
</dbReference>
<dbReference type="RefSeq" id="WP_010960141.1">
    <property type="nucleotide sequence ID" value="NC_002977.6"/>
</dbReference>
<dbReference type="SMR" id="Q60AN1"/>
<dbReference type="STRING" id="243233.MCA0817"/>
<dbReference type="GeneID" id="88223129"/>
<dbReference type="KEGG" id="mca:MCA0817"/>
<dbReference type="eggNOG" id="COG1154">
    <property type="taxonomic scope" value="Bacteria"/>
</dbReference>
<dbReference type="HOGENOM" id="CLU_009227_1_4_6"/>
<dbReference type="UniPathway" id="UPA00064">
    <property type="reaction ID" value="UER00091"/>
</dbReference>
<dbReference type="Proteomes" id="UP000006821">
    <property type="component" value="Chromosome"/>
</dbReference>
<dbReference type="GO" id="GO:0005829">
    <property type="term" value="C:cytosol"/>
    <property type="evidence" value="ECO:0007669"/>
    <property type="project" value="TreeGrafter"/>
</dbReference>
<dbReference type="GO" id="GO:0008661">
    <property type="term" value="F:1-deoxy-D-xylulose-5-phosphate synthase activity"/>
    <property type="evidence" value="ECO:0007669"/>
    <property type="project" value="UniProtKB-UniRule"/>
</dbReference>
<dbReference type="GO" id="GO:0000287">
    <property type="term" value="F:magnesium ion binding"/>
    <property type="evidence" value="ECO:0007669"/>
    <property type="project" value="UniProtKB-UniRule"/>
</dbReference>
<dbReference type="GO" id="GO:0030976">
    <property type="term" value="F:thiamine pyrophosphate binding"/>
    <property type="evidence" value="ECO:0007669"/>
    <property type="project" value="UniProtKB-UniRule"/>
</dbReference>
<dbReference type="GO" id="GO:0052865">
    <property type="term" value="P:1-deoxy-D-xylulose 5-phosphate biosynthetic process"/>
    <property type="evidence" value="ECO:0007669"/>
    <property type="project" value="UniProtKB-UniPathway"/>
</dbReference>
<dbReference type="GO" id="GO:0019288">
    <property type="term" value="P:isopentenyl diphosphate biosynthetic process, methylerythritol 4-phosphate pathway"/>
    <property type="evidence" value="ECO:0007669"/>
    <property type="project" value="TreeGrafter"/>
</dbReference>
<dbReference type="GO" id="GO:0016114">
    <property type="term" value="P:terpenoid biosynthetic process"/>
    <property type="evidence" value="ECO:0007669"/>
    <property type="project" value="UniProtKB-UniRule"/>
</dbReference>
<dbReference type="GO" id="GO:0009228">
    <property type="term" value="P:thiamine biosynthetic process"/>
    <property type="evidence" value="ECO:0007669"/>
    <property type="project" value="UniProtKB-UniRule"/>
</dbReference>
<dbReference type="CDD" id="cd02007">
    <property type="entry name" value="TPP_DXS"/>
    <property type="match status" value="1"/>
</dbReference>
<dbReference type="CDD" id="cd07033">
    <property type="entry name" value="TPP_PYR_DXS_TK_like"/>
    <property type="match status" value="1"/>
</dbReference>
<dbReference type="FunFam" id="3.40.50.920:FF:000002">
    <property type="entry name" value="1-deoxy-D-xylulose-5-phosphate synthase"/>
    <property type="match status" value="1"/>
</dbReference>
<dbReference type="FunFam" id="3.40.50.970:FF:000005">
    <property type="entry name" value="1-deoxy-D-xylulose-5-phosphate synthase"/>
    <property type="match status" value="1"/>
</dbReference>
<dbReference type="Gene3D" id="3.40.50.920">
    <property type="match status" value="1"/>
</dbReference>
<dbReference type="Gene3D" id="3.40.50.970">
    <property type="match status" value="2"/>
</dbReference>
<dbReference type="HAMAP" id="MF_00315">
    <property type="entry name" value="DXP_synth"/>
    <property type="match status" value="1"/>
</dbReference>
<dbReference type="InterPro" id="IPR005477">
    <property type="entry name" value="Dxylulose-5-P_synthase"/>
</dbReference>
<dbReference type="InterPro" id="IPR029061">
    <property type="entry name" value="THDP-binding"/>
</dbReference>
<dbReference type="InterPro" id="IPR009014">
    <property type="entry name" value="Transketo_C/PFOR_II"/>
</dbReference>
<dbReference type="InterPro" id="IPR005475">
    <property type="entry name" value="Transketolase-like_Pyr-bd"/>
</dbReference>
<dbReference type="InterPro" id="IPR020826">
    <property type="entry name" value="Transketolase_BS"/>
</dbReference>
<dbReference type="InterPro" id="IPR033248">
    <property type="entry name" value="Transketolase_C"/>
</dbReference>
<dbReference type="InterPro" id="IPR049557">
    <property type="entry name" value="Transketolase_CS"/>
</dbReference>
<dbReference type="NCBIfam" id="TIGR00204">
    <property type="entry name" value="dxs"/>
    <property type="match status" value="1"/>
</dbReference>
<dbReference type="NCBIfam" id="NF003933">
    <property type="entry name" value="PRK05444.2-2"/>
    <property type="match status" value="1"/>
</dbReference>
<dbReference type="PANTHER" id="PTHR43322">
    <property type="entry name" value="1-D-DEOXYXYLULOSE 5-PHOSPHATE SYNTHASE-RELATED"/>
    <property type="match status" value="1"/>
</dbReference>
<dbReference type="PANTHER" id="PTHR43322:SF5">
    <property type="entry name" value="1-DEOXY-D-XYLULOSE-5-PHOSPHATE SYNTHASE, CHLOROPLASTIC"/>
    <property type="match status" value="1"/>
</dbReference>
<dbReference type="Pfam" id="PF13292">
    <property type="entry name" value="DXP_synthase_N"/>
    <property type="match status" value="1"/>
</dbReference>
<dbReference type="Pfam" id="PF02779">
    <property type="entry name" value="Transket_pyr"/>
    <property type="match status" value="1"/>
</dbReference>
<dbReference type="Pfam" id="PF02780">
    <property type="entry name" value="Transketolase_C"/>
    <property type="match status" value="1"/>
</dbReference>
<dbReference type="SMART" id="SM00861">
    <property type="entry name" value="Transket_pyr"/>
    <property type="match status" value="1"/>
</dbReference>
<dbReference type="SUPFAM" id="SSF52518">
    <property type="entry name" value="Thiamin diphosphate-binding fold (THDP-binding)"/>
    <property type="match status" value="2"/>
</dbReference>
<dbReference type="SUPFAM" id="SSF52922">
    <property type="entry name" value="TK C-terminal domain-like"/>
    <property type="match status" value="1"/>
</dbReference>
<dbReference type="PROSITE" id="PS00801">
    <property type="entry name" value="TRANSKETOLASE_1"/>
    <property type="match status" value="1"/>
</dbReference>
<dbReference type="PROSITE" id="PS00802">
    <property type="entry name" value="TRANSKETOLASE_2"/>
    <property type="match status" value="1"/>
</dbReference>
<organism>
    <name type="scientific">Methylococcus capsulatus (strain ATCC 33009 / NCIMB 11132 / Bath)</name>
    <dbReference type="NCBI Taxonomy" id="243233"/>
    <lineage>
        <taxon>Bacteria</taxon>
        <taxon>Pseudomonadati</taxon>
        <taxon>Pseudomonadota</taxon>
        <taxon>Gammaproteobacteria</taxon>
        <taxon>Methylococcales</taxon>
        <taxon>Methylococcaceae</taxon>
        <taxon>Methylococcus</taxon>
    </lineage>
</organism>
<accession>Q60AN1</accession>